<feature type="chain" id="PRO_1000021542" description="Histidine ammonia-lyase">
    <location>
        <begin position="1"/>
        <end position="505"/>
    </location>
</feature>
<feature type="modified residue" description="2,3-didehydroalanine (Ser)" evidence="1">
    <location>
        <position position="142"/>
    </location>
</feature>
<feature type="cross-link" description="5-imidazolinone (Ala-Gly)" evidence="1">
    <location>
        <begin position="141"/>
        <end position="143"/>
    </location>
</feature>
<evidence type="ECO:0000255" key="1">
    <source>
        <dbReference type="HAMAP-Rule" id="MF_00229"/>
    </source>
</evidence>
<accession>Q637H8</accession>
<reference key="1">
    <citation type="journal article" date="2006" name="J. Bacteriol.">
        <title>Pathogenomic sequence analysis of Bacillus cereus and Bacillus thuringiensis isolates closely related to Bacillus anthracis.</title>
        <authorList>
            <person name="Han C.S."/>
            <person name="Xie G."/>
            <person name="Challacombe J.F."/>
            <person name="Altherr M.R."/>
            <person name="Bhotika S.S."/>
            <person name="Bruce D."/>
            <person name="Campbell C.S."/>
            <person name="Campbell M.L."/>
            <person name="Chen J."/>
            <person name="Chertkov O."/>
            <person name="Cleland C."/>
            <person name="Dimitrijevic M."/>
            <person name="Doggett N.A."/>
            <person name="Fawcett J.J."/>
            <person name="Glavina T."/>
            <person name="Goodwin L.A."/>
            <person name="Hill K.K."/>
            <person name="Hitchcock P."/>
            <person name="Jackson P.J."/>
            <person name="Keim P."/>
            <person name="Kewalramani A.R."/>
            <person name="Longmire J."/>
            <person name="Lucas S."/>
            <person name="Malfatti S."/>
            <person name="McMurry K."/>
            <person name="Meincke L.J."/>
            <person name="Misra M."/>
            <person name="Moseman B.L."/>
            <person name="Mundt M."/>
            <person name="Munk A.C."/>
            <person name="Okinaka R.T."/>
            <person name="Parson-Quintana B."/>
            <person name="Reilly L.P."/>
            <person name="Richardson P."/>
            <person name="Robinson D.L."/>
            <person name="Rubin E."/>
            <person name="Saunders E."/>
            <person name="Tapia R."/>
            <person name="Tesmer J.G."/>
            <person name="Thayer N."/>
            <person name="Thompson L.S."/>
            <person name="Tice H."/>
            <person name="Ticknor L.O."/>
            <person name="Wills P.L."/>
            <person name="Brettin T.S."/>
            <person name="Gilna P."/>
        </authorList>
    </citation>
    <scope>NUCLEOTIDE SEQUENCE [LARGE SCALE GENOMIC DNA]</scope>
    <source>
        <strain>ZK / E33L</strain>
    </source>
</reference>
<gene>
    <name evidence="1" type="primary">hutH</name>
    <name type="ordered locus">BCE33L3354</name>
</gene>
<comment type="catalytic activity">
    <reaction evidence="1">
        <text>L-histidine = trans-urocanate + NH4(+)</text>
        <dbReference type="Rhea" id="RHEA:21232"/>
        <dbReference type="ChEBI" id="CHEBI:17771"/>
        <dbReference type="ChEBI" id="CHEBI:28938"/>
        <dbReference type="ChEBI" id="CHEBI:57595"/>
        <dbReference type="EC" id="4.3.1.3"/>
    </reaction>
</comment>
<comment type="pathway">
    <text evidence="1">Amino-acid degradation; L-histidine degradation into L-glutamate; N-formimidoyl-L-glutamate from L-histidine: step 1/3.</text>
</comment>
<comment type="subcellular location">
    <subcellularLocation>
        <location evidence="1">Cytoplasm</location>
    </subcellularLocation>
</comment>
<comment type="PTM">
    <text evidence="1">Contains an active site 4-methylidene-imidazol-5-one (MIO), which is formed autocatalytically by cyclization and dehydration of residues Ala-Ser-Gly.</text>
</comment>
<comment type="similarity">
    <text evidence="1">Belongs to the PAL/histidase family.</text>
</comment>
<name>HUTH_BACCZ</name>
<sequence>MITLTGHTLTVEEMKRLLLEGEGVTACPNSMQKVAECREVVEKIVEDGKVVYGITTGFGKFSDVLIQKEDVKALQHNLIQSHACGIGDPFPEEVSRGMLILRANTMLKGVSGVRPLVVNMLLEFVNRKIHPVVPQQGSLGASGDLAPLSHLALVLLGEGEVFYKGKRAHAMVALTEEGLEPIELEAKEGLALINGTQAMTAQGVLSYIEAEATAYQAELIASMTIEGLQGIIDAFDENVHKARGYKEQVEVASRIRDILHDSKLTTKQGELRVQDAYSLRCIPQVHGASWQVLNYVKEKLEIEMNAATDNPLIFDGGEKVISGGNFHGQPIAFAMDFLKVGMAELANISERRIERLVNPQLNDLPPFLSPEPGLQSGAMIMQYAAASLVSENKTLAHPASVDSIPSSANQEDHVSMGTIASRHAHQIIQNVRRVLSIEMICAMQAAEYRGIENMSTVTKSFYHQGRQQVPSITNDRIFSTDIENITHWLKTNYSIKERLDVNAAL</sequence>
<protein>
    <recommendedName>
        <fullName evidence="1">Histidine ammonia-lyase</fullName>
        <shortName evidence="1">Histidase</shortName>
        <ecNumber evidence="1">4.3.1.3</ecNumber>
    </recommendedName>
</protein>
<keyword id="KW-0963">Cytoplasm</keyword>
<keyword id="KW-0369">Histidine metabolism</keyword>
<keyword id="KW-0456">Lyase</keyword>
<dbReference type="EC" id="4.3.1.3" evidence="1"/>
<dbReference type="EMBL" id="CP000001">
    <property type="protein sequence ID" value="AAU16913.1"/>
    <property type="molecule type" value="Genomic_DNA"/>
</dbReference>
<dbReference type="RefSeq" id="WP_000631863.1">
    <property type="nucleotide sequence ID" value="NC_006274.1"/>
</dbReference>
<dbReference type="SMR" id="Q637H8"/>
<dbReference type="KEGG" id="bcz:BCE33L3354"/>
<dbReference type="PATRIC" id="fig|288681.22.peg.2069"/>
<dbReference type="UniPathway" id="UPA00379">
    <property type="reaction ID" value="UER00549"/>
</dbReference>
<dbReference type="Proteomes" id="UP000002612">
    <property type="component" value="Chromosome"/>
</dbReference>
<dbReference type="GO" id="GO:0005737">
    <property type="term" value="C:cytoplasm"/>
    <property type="evidence" value="ECO:0007669"/>
    <property type="project" value="UniProtKB-SubCell"/>
</dbReference>
<dbReference type="GO" id="GO:0004397">
    <property type="term" value="F:histidine ammonia-lyase activity"/>
    <property type="evidence" value="ECO:0007669"/>
    <property type="project" value="UniProtKB-UniRule"/>
</dbReference>
<dbReference type="GO" id="GO:0019556">
    <property type="term" value="P:L-histidine catabolic process to glutamate and formamide"/>
    <property type="evidence" value="ECO:0007669"/>
    <property type="project" value="UniProtKB-UniPathway"/>
</dbReference>
<dbReference type="GO" id="GO:0019557">
    <property type="term" value="P:L-histidine catabolic process to glutamate and formate"/>
    <property type="evidence" value="ECO:0007669"/>
    <property type="project" value="UniProtKB-UniPathway"/>
</dbReference>
<dbReference type="CDD" id="cd00332">
    <property type="entry name" value="PAL-HAL"/>
    <property type="match status" value="1"/>
</dbReference>
<dbReference type="FunFam" id="1.10.275.10:FF:000008">
    <property type="entry name" value="Histidine ammonia-lyase"/>
    <property type="match status" value="1"/>
</dbReference>
<dbReference type="FunFam" id="1.20.200.10:FF:000003">
    <property type="entry name" value="Histidine ammonia-lyase"/>
    <property type="match status" value="1"/>
</dbReference>
<dbReference type="Gene3D" id="1.20.200.10">
    <property type="entry name" value="Fumarase/aspartase (Central domain)"/>
    <property type="match status" value="1"/>
</dbReference>
<dbReference type="Gene3D" id="1.10.275.10">
    <property type="entry name" value="Fumarase/aspartase (N-terminal domain)"/>
    <property type="match status" value="1"/>
</dbReference>
<dbReference type="HAMAP" id="MF_00229">
    <property type="entry name" value="His_ammonia_lyase"/>
    <property type="match status" value="1"/>
</dbReference>
<dbReference type="InterPro" id="IPR001106">
    <property type="entry name" value="Aromatic_Lyase"/>
</dbReference>
<dbReference type="InterPro" id="IPR024083">
    <property type="entry name" value="Fumarase/histidase_N"/>
</dbReference>
<dbReference type="InterPro" id="IPR005921">
    <property type="entry name" value="HutH"/>
</dbReference>
<dbReference type="InterPro" id="IPR008948">
    <property type="entry name" value="L-Aspartase-like"/>
</dbReference>
<dbReference type="InterPro" id="IPR022313">
    <property type="entry name" value="Phe/His_NH3-lyase_AS"/>
</dbReference>
<dbReference type="NCBIfam" id="TIGR01225">
    <property type="entry name" value="hutH"/>
    <property type="match status" value="1"/>
</dbReference>
<dbReference type="NCBIfam" id="NF006871">
    <property type="entry name" value="PRK09367.1"/>
    <property type="match status" value="1"/>
</dbReference>
<dbReference type="PANTHER" id="PTHR10362">
    <property type="entry name" value="HISTIDINE AMMONIA-LYASE"/>
    <property type="match status" value="1"/>
</dbReference>
<dbReference type="Pfam" id="PF00221">
    <property type="entry name" value="Lyase_aromatic"/>
    <property type="match status" value="1"/>
</dbReference>
<dbReference type="SUPFAM" id="SSF48557">
    <property type="entry name" value="L-aspartase-like"/>
    <property type="match status" value="1"/>
</dbReference>
<dbReference type="PROSITE" id="PS00488">
    <property type="entry name" value="PAL_HISTIDASE"/>
    <property type="match status" value="1"/>
</dbReference>
<organism>
    <name type="scientific">Bacillus cereus (strain ZK / E33L)</name>
    <dbReference type="NCBI Taxonomy" id="288681"/>
    <lineage>
        <taxon>Bacteria</taxon>
        <taxon>Bacillati</taxon>
        <taxon>Bacillota</taxon>
        <taxon>Bacilli</taxon>
        <taxon>Bacillales</taxon>
        <taxon>Bacillaceae</taxon>
        <taxon>Bacillus</taxon>
        <taxon>Bacillus cereus group</taxon>
    </lineage>
</organism>
<proteinExistence type="inferred from homology"/>